<organism>
    <name type="scientific">Mus musculus</name>
    <name type="common">Mouse</name>
    <dbReference type="NCBI Taxonomy" id="10090"/>
    <lineage>
        <taxon>Eukaryota</taxon>
        <taxon>Metazoa</taxon>
        <taxon>Chordata</taxon>
        <taxon>Craniata</taxon>
        <taxon>Vertebrata</taxon>
        <taxon>Euteleostomi</taxon>
        <taxon>Mammalia</taxon>
        <taxon>Eutheria</taxon>
        <taxon>Euarchontoglires</taxon>
        <taxon>Glires</taxon>
        <taxon>Rodentia</taxon>
        <taxon>Myomorpha</taxon>
        <taxon>Muroidea</taxon>
        <taxon>Muridae</taxon>
        <taxon>Murinae</taxon>
        <taxon>Mus</taxon>
        <taxon>Mus</taxon>
    </lineage>
</organism>
<reference key="1">
    <citation type="journal article" date="1998" name="Oncogene">
        <title>Cyclin E2: a novel CDK2 partner in the late G1 and S phases of the mammalian cell cycle.</title>
        <authorList>
            <person name="Lauper N."/>
            <person name="Beck A.R.P."/>
            <person name="Cariou S."/>
            <person name="Richman L."/>
            <person name="Hofmann K."/>
            <person name="Reith W."/>
            <person name="Slingerland J.M."/>
            <person name="Amati B."/>
        </authorList>
    </citation>
    <scope>NUCLEOTIDE SEQUENCE [MRNA]</scope>
    <scope>FUNCTION</scope>
    <source>
        <tissue>Brain</tissue>
    </source>
</reference>
<reference key="2">
    <citation type="journal article" date="1999" name="Mol. Cell. Biol.">
        <title>Cyclin E2, a novel G1 cyclin that binds Cdk2 and is aberrantly expressed in human cancers.</title>
        <authorList>
            <person name="Gudas J.M."/>
            <person name="Payton M."/>
            <person name="Thukral S."/>
            <person name="Chen E."/>
            <person name="Bass M."/>
            <person name="Robinson M.O."/>
            <person name="Coats S."/>
        </authorList>
    </citation>
    <scope>NUCLEOTIDE SEQUENCE [MRNA]</scope>
    <source>
        <tissue>Brain</tissue>
    </source>
</reference>
<reference key="3">
    <citation type="journal article" date="2010" name="Cell">
        <title>A tissue-specific atlas of mouse protein phosphorylation and expression.</title>
        <authorList>
            <person name="Huttlin E.L."/>
            <person name="Jedrychowski M.P."/>
            <person name="Elias J.E."/>
            <person name="Goswami T."/>
            <person name="Rad R."/>
            <person name="Beausoleil S.A."/>
            <person name="Villen J."/>
            <person name="Haas W."/>
            <person name="Sowa M.E."/>
            <person name="Gygi S.P."/>
        </authorList>
    </citation>
    <scope>PHOSPHORYLATION [LARGE SCALE ANALYSIS] AT SER-21 AND SER-383</scope>
    <scope>IDENTIFICATION BY MASS SPECTROMETRY [LARGE SCALE ANALYSIS]</scope>
    <source>
        <tissue>Spleen</tissue>
    </source>
</reference>
<keyword id="KW-0131">Cell cycle</keyword>
<keyword id="KW-0132">Cell division</keyword>
<keyword id="KW-0195">Cyclin</keyword>
<keyword id="KW-0539">Nucleus</keyword>
<keyword id="KW-0597">Phosphoprotein</keyword>
<keyword id="KW-1185">Reference proteome</keyword>
<dbReference type="EMBL" id="AF091432">
    <property type="protein sequence ID" value="AAC80527.1"/>
    <property type="molecule type" value="mRNA"/>
</dbReference>
<dbReference type="EMBL" id="AF106691">
    <property type="protein sequence ID" value="AAD08817.1"/>
    <property type="molecule type" value="mRNA"/>
</dbReference>
<dbReference type="CCDS" id="CCDS17965.1"/>
<dbReference type="RefSeq" id="NP_001032211.1">
    <property type="nucleotide sequence ID" value="NM_001037134.3"/>
</dbReference>
<dbReference type="RefSeq" id="NP_001269872.1">
    <property type="nucleotide sequence ID" value="NM_001282943.2"/>
</dbReference>
<dbReference type="RefSeq" id="NP_001406897.1">
    <property type="nucleotide sequence ID" value="NM_001419968.1"/>
</dbReference>
<dbReference type="RefSeq" id="NP_033960.1">
    <property type="nucleotide sequence ID" value="NM_009830.3"/>
</dbReference>
<dbReference type="RefSeq" id="XP_006537636.1">
    <property type="nucleotide sequence ID" value="XM_006537573.3"/>
</dbReference>
<dbReference type="RefSeq" id="XP_006537637.1">
    <property type="nucleotide sequence ID" value="XM_006537574.5"/>
</dbReference>
<dbReference type="RefSeq" id="XP_006537638.1">
    <property type="nucleotide sequence ID" value="XM_006537575.3"/>
</dbReference>
<dbReference type="RefSeq" id="XP_011248215.1">
    <property type="nucleotide sequence ID" value="XM_011249913.2"/>
</dbReference>
<dbReference type="SMR" id="Q9Z238"/>
<dbReference type="BioGRID" id="198553">
    <property type="interactions" value="1"/>
</dbReference>
<dbReference type="ComplexPortal" id="CPX-2082">
    <property type="entry name" value="Cyclin E2-CDK2 complex"/>
</dbReference>
<dbReference type="FunCoup" id="Q9Z238">
    <property type="interactions" value="2279"/>
</dbReference>
<dbReference type="STRING" id="10090.ENSMUSP00000130693"/>
<dbReference type="iPTMnet" id="Q9Z238"/>
<dbReference type="PhosphoSitePlus" id="Q9Z238"/>
<dbReference type="PaxDb" id="10090-ENSMUSP00000029866"/>
<dbReference type="ProteomicsDB" id="281337"/>
<dbReference type="Antibodypedia" id="3593">
    <property type="antibodies" value="374 antibodies from 39 providers"/>
</dbReference>
<dbReference type="DNASU" id="12448"/>
<dbReference type="Ensembl" id="ENSMUST00000108324.4">
    <property type="protein sequence ID" value="ENSMUSP00000103960.4"/>
    <property type="gene ID" value="ENSMUSG00000028212.17"/>
</dbReference>
<dbReference type="Ensembl" id="ENSMUST00000170901.8">
    <property type="protein sequence ID" value="ENSMUSP00000130693.2"/>
    <property type="gene ID" value="ENSMUSG00000028212.17"/>
</dbReference>
<dbReference type="GeneID" id="12448"/>
<dbReference type="KEGG" id="mmu:12448"/>
<dbReference type="UCSC" id="uc008rzd.2">
    <property type="organism name" value="mouse"/>
</dbReference>
<dbReference type="AGR" id="MGI:1329034"/>
<dbReference type="CTD" id="9134"/>
<dbReference type="MGI" id="MGI:1329034">
    <property type="gene designation" value="Ccne2"/>
</dbReference>
<dbReference type="VEuPathDB" id="HostDB:ENSMUSG00000028212"/>
<dbReference type="eggNOG" id="KOG0655">
    <property type="taxonomic scope" value="Eukaryota"/>
</dbReference>
<dbReference type="GeneTree" id="ENSGT00940000156934"/>
<dbReference type="HOGENOM" id="CLU_020695_8_0_1"/>
<dbReference type="InParanoid" id="Q9Z238"/>
<dbReference type="OMA" id="WPPTISG"/>
<dbReference type="OrthoDB" id="5590282at2759"/>
<dbReference type="PhylomeDB" id="Q9Z238"/>
<dbReference type="Reactome" id="R-MMU-1538133">
    <property type="pathway name" value="G0 and Early G1"/>
</dbReference>
<dbReference type="Reactome" id="R-MMU-187577">
    <property type="pathway name" value="SCF(Skp2)-mediated degradation of p27/p21"/>
</dbReference>
<dbReference type="Reactome" id="R-MMU-2559586">
    <property type="pathway name" value="DNA Damage/Telomere Stress Induced Senescence"/>
</dbReference>
<dbReference type="Reactome" id="R-MMU-6804116">
    <property type="pathway name" value="TP53 Regulates Transcription of Genes Involved in G1 Cell Cycle Arrest"/>
</dbReference>
<dbReference type="Reactome" id="R-MMU-69017">
    <property type="pathway name" value="CDK-mediated phosphorylation and removal of Cdc6"/>
</dbReference>
<dbReference type="Reactome" id="R-MMU-69200">
    <property type="pathway name" value="Phosphorylation of proteins involved in G1/S transition by active Cyclin E:Cdk2 complexes"/>
</dbReference>
<dbReference type="Reactome" id="R-MMU-69202">
    <property type="pathway name" value="Cyclin E associated events during G1/S transition"/>
</dbReference>
<dbReference type="Reactome" id="R-MMU-69231">
    <property type="pathway name" value="Cyclin D associated events in G1"/>
</dbReference>
<dbReference type="Reactome" id="R-MMU-69563">
    <property type="pathway name" value="p53-Dependent G1 DNA Damage Response"/>
</dbReference>
<dbReference type="BioGRID-ORCS" id="12448">
    <property type="hits" value="5 hits in 79 CRISPR screens"/>
</dbReference>
<dbReference type="PRO" id="PR:Q9Z238"/>
<dbReference type="Proteomes" id="UP000000589">
    <property type="component" value="Chromosome 4"/>
</dbReference>
<dbReference type="RNAct" id="Q9Z238">
    <property type="molecule type" value="protein"/>
</dbReference>
<dbReference type="Bgee" id="ENSMUSG00000028212">
    <property type="expression patterns" value="Expressed in spermatocyte and 257 other cell types or tissues"/>
</dbReference>
<dbReference type="ExpressionAtlas" id="Q9Z238">
    <property type="expression patterns" value="baseline and differential"/>
</dbReference>
<dbReference type="GO" id="GO:0097135">
    <property type="term" value="C:cyclin E2-CDK2 complex"/>
    <property type="evidence" value="ECO:0000314"/>
    <property type="project" value="MGI"/>
</dbReference>
<dbReference type="GO" id="GO:0005634">
    <property type="term" value="C:nucleus"/>
    <property type="evidence" value="ECO:0007669"/>
    <property type="project" value="UniProtKB-SubCell"/>
</dbReference>
<dbReference type="GO" id="GO:0016538">
    <property type="term" value="F:cyclin-dependent protein serine/threonine kinase regulator activity"/>
    <property type="evidence" value="ECO:0000314"/>
    <property type="project" value="MGI"/>
</dbReference>
<dbReference type="GO" id="GO:0019901">
    <property type="term" value="F:protein kinase binding"/>
    <property type="evidence" value="ECO:0007669"/>
    <property type="project" value="Ensembl"/>
</dbReference>
<dbReference type="GO" id="GO:0051301">
    <property type="term" value="P:cell division"/>
    <property type="evidence" value="ECO:0007669"/>
    <property type="project" value="UniProtKB-KW"/>
</dbReference>
<dbReference type="GO" id="GO:0070192">
    <property type="term" value="P:chromosome organization involved in meiotic cell cycle"/>
    <property type="evidence" value="ECO:0000316"/>
    <property type="project" value="MGI"/>
</dbReference>
<dbReference type="GO" id="GO:0006270">
    <property type="term" value="P:DNA replication initiation"/>
    <property type="evidence" value="ECO:0000315"/>
    <property type="project" value="MGI"/>
</dbReference>
<dbReference type="GO" id="GO:0007129">
    <property type="term" value="P:homologous chromosome pairing at meiosis"/>
    <property type="evidence" value="ECO:0000316"/>
    <property type="project" value="MGI"/>
</dbReference>
<dbReference type="GO" id="GO:0051726">
    <property type="term" value="P:regulation of cell cycle"/>
    <property type="evidence" value="ECO:0000314"/>
    <property type="project" value="MGI"/>
</dbReference>
<dbReference type="GO" id="GO:0032880">
    <property type="term" value="P:regulation of protein localization"/>
    <property type="evidence" value="ECO:0000316"/>
    <property type="project" value="MGI"/>
</dbReference>
<dbReference type="GO" id="GO:0000723">
    <property type="term" value="P:telomere maintenance"/>
    <property type="evidence" value="ECO:0000316"/>
    <property type="project" value="MGI"/>
</dbReference>
<dbReference type="FunFam" id="1.10.472.10:FF:000024">
    <property type="entry name" value="G1/S-specific cyclin-E1"/>
    <property type="match status" value="1"/>
</dbReference>
<dbReference type="Gene3D" id="1.10.472.10">
    <property type="entry name" value="Cyclin-like"/>
    <property type="match status" value="2"/>
</dbReference>
<dbReference type="InterPro" id="IPR039361">
    <property type="entry name" value="Cyclin"/>
</dbReference>
<dbReference type="InterPro" id="IPR013763">
    <property type="entry name" value="Cyclin-like_dom"/>
</dbReference>
<dbReference type="InterPro" id="IPR036915">
    <property type="entry name" value="Cyclin-like_sf"/>
</dbReference>
<dbReference type="InterPro" id="IPR004367">
    <property type="entry name" value="Cyclin_C-dom"/>
</dbReference>
<dbReference type="InterPro" id="IPR006671">
    <property type="entry name" value="Cyclin_N"/>
</dbReference>
<dbReference type="InterPro" id="IPR048258">
    <property type="entry name" value="Cyclins_cyclin-box"/>
</dbReference>
<dbReference type="PANTHER" id="PTHR10177">
    <property type="entry name" value="CYCLINS"/>
    <property type="match status" value="1"/>
</dbReference>
<dbReference type="Pfam" id="PF02984">
    <property type="entry name" value="Cyclin_C"/>
    <property type="match status" value="1"/>
</dbReference>
<dbReference type="Pfam" id="PF00134">
    <property type="entry name" value="Cyclin_N"/>
    <property type="match status" value="1"/>
</dbReference>
<dbReference type="SMART" id="SM00385">
    <property type="entry name" value="CYCLIN"/>
    <property type="match status" value="1"/>
</dbReference>
<dbReference type="SMART" id="SM01332">
    <property type="entry name" value="Cyclin_C"/>
    <property type="match status" value="1"/>
</dbReference>
<dbReference type="SUPFAM" id="SSF47954">
    <property type="entry name" value="Cyclin-like"/>
    <property type="match status" value="2"/>
</dbReference>
<dbReference type="PROSITE" id="PS00292">
    <property type="entry name" value="CYCLINS"/>
    <property type="match status" value="1"/>
</dbReference>
<comment type="function">
    <text evidence="3">Essential for the control of the cell cycle at the late G1 and early S phase.</text>
</comment>
<comment type="subunit">
    <text evidence="1">Interacts with the CDK2 (in vivo) and CDK3 (in vitro) protein kinases to form a serine/threonine kinase holoenzyme complex. The cyclin subunit imparts substrate specificity to the complex.</text>
</comment>
<comment type="subcellular location">
    <subcellularLocation>
        <location evidence="1">Nucleus</location>
    </subcellularLocation>
</comment>
<comment type="tissue specificity">
    <text>Highest levels in adult testis, thymus and brain. Lower levels in placenta, spleen and colon.</text>
</comment>
<comment type="PTM">
    <text evidence="1">Phosphorylation by CDK2 triggers its release from CDK2 and degradation via the ubiquitin proteasome pathway.</text>
</comment>
<comment type="PTM">
    <text evidence="1">Lactylated at Lys-348. Delactylated by SIRT3.</text>
</comment>
<comment type="similarity">
    <text evidence="4">Belongs to the cyclin family. Cyclin E subfamily.</text>
</comment>
<gene>
    <name type="primary">Ccne2</name>
</gene>
<accession>Q9Z238</accession>
<accession>Q9QWU5</accession>
<name>CCNE2_MOUSE</name>
<feature type="chain" id="PRO_0000080462" description="G1/S-specific cyclin-E2">
    <location>
        <begin position="1"/>
        <end position="404"/>
    </location>
</feature>
<feature type="region of interest" description="Disordered" evidence="2">
    <location>
        <begin position="1"/>
        <end position="41"/>
    </location>
</feature>
<feature type="compositionally biased region" description="Polar residues" evidence="2">
    <location>
        <begin position="7"/>
        <end position="28"/>
    </location>
</feature>
<feature type="modified residue" description="Phosphoserine" evidence="5">
    <location>
        <position position="21"/>
    </location>
</feature>
<feature type="modified residue" description="N6-lactoyllysine" evidence="1">
    <location>
        <position position="348"/>
    </location>
</feature>
<feature type="modified residue" description="Phosphoserine" evidence="5">
    <location>
        <position position="383"/>
    </location>
</feature>
<feature type="modified residue" description="Phosphothreonine" evidence="1">
    <location>
        <position position="392"/>
    </location>
</feature>
<feature type="sequence conflict" description="In Ref. 2; AAD08817." evidence="4" ref="2">
    <location>
        <position position="6"/>
    </location>
</feature>
<sequence length="404" mass="46669">MSRRSSRLQAKQHAQPNQPDSPQETQIIQAKKRKTAQDVKKRKEEITKKHQYEIRNCWPPVLSGGISPCIIIETPHKEIGTSDFSRFTNYRFKNLFINPSPLPDLSWACSQEVWQNMLQKENRYVHDKHFQVLHSDLEPQMRSILLDWLLEVCEVYTLHRETFYLAQDFFDRFMLTQKDVNKNMLQLIGITSLFIASKLEEIYAPKLQEFAYVTDGACSEVDILKMELNILKALKWELCPVTVISWLNLFLQVDAVKDVPKVLLPQYSQETFIQIAQLLDLCILAIDSLEFQYRILAAAALCHFTSIEVVKKASGLEWDDISECVDWMVPFVSVVKSVSPVKLKTFKKIPMEDRHNIQTHTNYLALLNEVNYVNIYRKGGQLSPVCNGGIMTPPKSTEKPPGKH</sequence>
<evidence type="ECO:0000250" key="1">
    <source>
        <dbReference type="UniProtKB" id="O96020"/>
    </source>
</evidence>
<evidence type="ECO:0000256" key="2">
    <source>
        <dbReference type="SAM" id="MobiDB-lite"/>
    </source>
</evidence>
<evidence type="ECO:0000269" key="3">
    <source>
    </source>
</evidence>
<evidence type="ECO:0000305" key="4"/>
<evidence type="ECO:0007744" key="5">
    <source>
    </source>
</evidence>
<proteinExistence type="evidence at protein level"/>
<protein>
    <recommendedName>
        <fullName>G1/S-specific cyclin-E2</fullName>
    </recommendedName>
</protein>